<feature type="chain" id="PRO_0000104501" description="Serpentine receptor class beta-7">
    <location>
        <begin position="1"/>
        <end position="348"/>
    </location>
</feature>
<feature type="transmembrane region" description="Helical" evidence="1">
    <location>
        <begin position="31"/>
        <end position="51"/>
    </location>
</feature>
<feature type="transmembrane region" description="Helical" evidence="1">
    <location>
        <begin position="63"/>
        <end position="83"/>
    </location>
</feature>
<feature type="transmembrane region" description="Helical" evidence="1">
    <location>
        <begin position="107"/>
        <end position="127"/>
    </location>
</feature>
<feature type="transmembrane region" description="Helical" evidence="1">
    <location>
        <begin position="145"/>
        <end position="165"/>
    </location>
</feature>
<feature type="transmembrane region" description="Helical" evidence="1">
    <location>
        <begin position="191"/>
        <end position="211"/>
    </location>
</feature>
<feature type="transmembrane region" description="Helical" evidence="1">
    <location>
        <begin position="241"/>
        <end position="261"/>
    </location>
</feature>
<feature type="transmembrane region" description="Helical" evidence="1">
    <location>
        <begin position="280"/>
        <end position="300"/>
    </location>
</feature>
<accession>P54142</accession>
<organism>
    <name type="scientific">Caenorhabditis elegans</name>
    <dbReference type="NCBI Taxonomy" id="6239"/>
    <lineage>
        <taxon>Eukaryota</taxon>
        <taxon>Metazoa</taxon>
        <taxon>Ecdysozoa</taxon>
        <taxon>Nematoda</taxon>
        <taxon>Chromadorea</taxon>
        <taxon>Rhabditida</taxon>
        <taxon>Rhabditina</taxon>
        <taxon>Rhabditomorpha</taxon>
        <taxon>Rhabditoidea</taxon>
        <taxon>Rhabditidae</taxon>
        <taxon>Peloderinae</taxon>
        <taxon>Caenorhabditis</taxon>
    </lineage>
</organism>
<gene>
    <name type="primary">srb-7</name>
    <name type="ORF">F37C12.17</name>
</gene>
<proteinExistence type="inferred from homology"/>
<evidence type="ECO:0000255" key="1"/>
<evidence type="ECO:0000305" key="2"/>
<comment type="subcellular location">
    <subcellularLocation>
        <location evidence="2">Membrane</location>
        <topology evidence="2">Multi-pass membrane protein</topology>
    </subcellularLocation>
</comment>
<comment type="similarity">
    <text evidence="2">Belongs to the nematode receptor-like protein srb family.</text>
</comment>
<name>SRB7_CAEEL</name>
<dbReference type="EMBL" id="FO081316">
    <property type="protein sequence ID" value="CCD70746.1"/>
    <property type="molecule type" value="Genomic_DNA"/>
</dbReference>
<dbReference type="PIR" id="T28832">
    <property type="entry name" value="T28832"/>
</dbReference>
<dbReference type="RefSeq" id="NP_498571.2">
    <property type="nucleotide sequence ID" value="NM_066170.2"/>
</dbReference>
<dbReference type="SMR" id="P54142"/>
<dbReference type="FunCoup" id="P54142">
    <property type="interactions" value="1"/>
</dbReference>
<dbReference type="PaxDb" id="6239-F37C12.17"/>
<dbReference type="UCSC" id="F37C12.17">
    <property type="organism name" value="c. elegans"/>
</dbReference>
<dbReference type="WormBase" id="F37C12.17">
    <property type="protein sequence ID" value="CE38180"/>
    <property type="gene ID" value="WBGene00005072"/>
    <property type="gene designation" value="srb-7"/>
</dbReference>
<dbReference type="eggNOG" id="ENOG502THCV">
    <property type="taxonomic scope" value="Eukaryota"/>
</dbReference>
<dbReference type="HOGENOM" id="CLU_045882_0_0_1"/>
<dbReference type="InParanoid" id="P54142"/>
<dbReference type="OMA" id="IYRISQI"/>
<dbReference type="PhylomeDB" id="P54142"/>
<dbReference type="PRO" id="PR:P54142"/>
<dbReference type="Proteomes" id="UP000001940">
    <property type="component" value="Chromosome III"/>
</dbReference>
<dbReference type="GO" id="GO:0016020">
    <property type="term" value="C:membrane"/>
    <property type="evidence" value="ECO:0007669"/>
    <property type="project" value="UniProtKB-SubCell"/>
</dbReference>
<dbReference type="GO" id="GO:0004888">
    <property type="term" value="F:transmembrane signaling receptor activity"/>
    <property type="evidence" value="ECO:0007669"/>
    <property type="project" value="InterPro"/>
</dbReference>
<dbReference type="GO" id="GO:0007606">
    <property type="term" value="P:sensory perception of chemical stimulus"/>
    <property type="evidence" value="ECO:0007669"/>
    <property type="project" value="InterPro"/>
</dbReference>
<dbReference type="InterPro" id="IPR002184">
    <property type="entry name" value="7TM_GPCR_serpentine_rcpt_Srb"/>
</dbReference>
<dbReference type="PANTHER" id="PTHR31216">
    <property type="entry name" value="SERPENTINE RECEPTOR CLASS BETA-1-RELATED-RELATED"/>
    <property type="match status" value="1"/>
</dbReference>
<dbReference type="PANTHER" id="PTHR31216:SF10">
    <property type="entry name" value="SERPENTINE RECEPTOR CLASS BETA-7"/>
    <property type="match status" value="1"/>
</dbReference>
<dbReference type="Pfam" id="PF02175">
    <property type="entry name" value="7TM_GPCR_Srb"/>
    <property type="match status" value="1"/>
</dbReference>
<dbReference type="PRINTS" id="PR00699">
    <property type="entry name" value="TMPROTEINSRB"/>
</dbReference>
<keyword id="KW-0472">Membrane</keyword>
<keyword id="KW-1185">Reference proteome</keyword>
<keyword id="KW-0812">Transmembrane</keyword>
<keyword id="KW-1133">Transmembrane helix</keyword>
<reference key="1">
    <citation type="journal article" date="1998" name="Science">
        <title>Genome sequence of the nematode C. elegans: a platform for investigating biology.</title>
        <authorList>
            <consortium name="The C. elegans sequencing consortium"/>
        </authorList>
    </citation>
    <scope>NUCLEOTIDE SEQUENCE [LARGE SCALE GENOMIC DNA]</scope>
    <source>
        <strain>Bristol N2</strain>
    </source>
</reference>
<sequence>MNESSTNIPLACITAYELSFHPVYRNFQIYQLIMLFSSLFPLTYFILFQLLKSSFHGNLKSLLVGYFGAILVFSVVFLVEAFIQVLLPFISEQKCDLLIQPKYYKLGNLLGCLLMTIPTFFPISITFERLIATKMADDYEKTRVFLGPILAIFLVLLDLFLILLIYKEAIVTGGSISFVFIPASIASKMYMFFIMMLILNSFNFFFSFLLLRRNAQLKKSNSTLAAKFQLEEVYSSTKFSISVIFVHVTFFGSYTTITILLRYFGSYFFSDPIDLGAVRGAFMTMISSYNFAVGVASVYFNYIYRIKKIIEIKGNIRIVATGQAGAINYDKAIFNIWNSTSSTNNTSY</sequence>
<protein>
    <recommendedName>
        <fullName>Serpentine receptor class beta-7</fullName>
        <shortName>Protein srb-7</shortName>
    </recommendedName>
</protein>